<accession>P0CH89</accession>
<dbReference type="EC" id="3.2.1.35"/>
<dbReference type="Allergome" id="3515">
    <property type="allergen name" value="Ves m 2.0101"/>
</dbReference>
<dbReference type="Allergome" id="662">
    <property type="allergen name" value="Ves m 2"/>
</dbReference>
<dbReference type="GO" id="GO:0005576">
    <property type="term" value="C:extracellular region"/>
    <property type="evidence" value="ECO:0007669"/>
    <property type="project" value="UniProtKB-SubCell"/>
</dbReference>
<dbReference type="GO" id="GO:0004415">
    <property type="term" value="F:hyalurononglucosaminidase activity"/>
    <property type="evidence" value="ECO:0007669"/>
    <property type="project" value="UniProtKB-EC"/>
</dbReference>
<name>HUGA_VESMC</name>
<keyword id="KW-0020">Allergen</keyword>
<keyword id="KW-0903">Direct protein sequencing</keyword>
<keyword id="KW-1015">Disulfide bond</keyword>
<keyword id="KW-0325">Glycoprotein</keyword>
<keyword id="KW-0326">Glycosidase</keyword>
<keyword id="KW-0378">Hydrolase</keyword>
<keyword id="KW-0964">Secreted</keyword>
<protein>
    <recommendedName>
        <fullName>Hyaluronidase</fullName>
        <shortName>Hya</shortName>
        <ecNumber>3.2.1.35</ecNumber>
    </recommendedName>
    <alternativeName>
        <fullName>Hyaluronoglucosaminidase</fullName>
    </alternativeName>
    <allergenName>Ves m 2</allergenName>
</protein>
<feature type="chain" id="PRO_0000401923" description="Hyaluronidase">
    <location>
        <begin position="1"/>
        <end position="31" status="greater than"/>
    </location>
</feature>
<feature type="non-terminal residue">
    <location>
        <position position="31"/>
    </location>
</feature>
<reference key="1">
    <citation type="journal article" date="1992" name="J. Allergy Clin. Immunol.">
        <title>The cross-reactivity between bee and vespid hyaluronidases has a structural basis.</title>
        <authorList>
            <person name="Jacobson R.S."/>
            <person name="Hoffman D.R."/>
            <person name="Kemeny D.M."/>
        </authorList>
    </citation>
    <scope>PROTEIN SEQUENCE</scope>
</reference>
<proteinExistence type="evidence at protein level"/>
<evidence type="ECO:0000250" key="1"/>
<evidence type="ECO:0000305" key="2"/>
<comment type="function">
    <text evidence="1">Hydrolyzes high molecular weight hyaluronic acid to produce small oligosaccharides.</text>
</comment>
<comment type="catalytic activity">
    <reaction>
        <text>Random hydrolysis of (1-&gt;4)-linkages between N-acetyl-beta-D-glucosamine and D-glucuronate residues in hyaluronate.</text>
        <dbReference type="EC" id="3.2.1.35"/>
    </reaction>
</comment>
<comment type="subcellular location">
    <subcellularLocation>
        <location>Secreted</location>
    </subcellularLocation>
</comment>
<comment type="tissue specificity">
    <text>Expressed by the venom gland.</text>
</comment>
<comment type="PTM">
    <text evidence="1">Contains 2 disulfide bonds.</text>
</comment>
<comment type="PTM">
    <text evidence="1">N-glycosylated on at least two Asn residues by identical heptasaccharide units composed of Man, GlcNAc, and Fuc residues in the molar ration of 3:2:2.</text>
</comment>
<comment type="allergen">
    <text>Causes an allergic reaction in human.</text>
</comment>
<comment type="similarity">
    <text evidence="2">Belongs to the glycosyl hydrolase 56 family.</text>
</comment>
<sequence>DRCIWPKEGFSIYWNIPTHFCHNFGVYFKEL</sequence>
<organism>
    <name type="scientific">Vespula maculifrons</name>
    <name type="common">Eastern yellow jacket</name>
    <name type="synonym">Wasp</name>
    <dbReference type="NCBI Taxonomy" id="7453"/>
    <lineage>
        <taxon>Eukaryota</taxon>
        <taxon>Metazoa</taxon>
        <taxon>Ecdysozoa</taxon>
        <taxon>Arthropoda</taxon>
        <taxon>Hexapoda</taxon>
        <taxon>Insecta</taxon>
        <taxon>Pterygota</taxon>
        <taxon>Neoptera</taxon>
        <taxon>Endopterygota</taxon>
        <taxon>Hymenoptera</taxon>
        <taxon>Apocrita</taxon>
        <taxon>Aculeata</taxon>
        <taxon>Vespoidea</taxon>
        <taxon>Vespidae</taxon>
        <taxon>Vespinae</taxon>
        <taxon>Vespula</taxon>
    </lineage>
</organism>